<proteinExistence type="evidence at protein level"/>
<evidence type="ECO:0000269" key="1">
    <source>
    </source>
</evidence>
<dbReference type="EMBL" id="AF362572">
    <property type="protein sequence ID" value="AAM00268.1"/>
    <property type="molecule type" value="mRNA"/>
</dbReference>
<dbReference type="RefSeq" id="NP_001191498.1">
    <property type="nucleotide sequence ID" value="NM_001204569.1"/>
</dbReference>
<dbReference type="RefSeq" id="XP_012944002.1">
    <property type="nucleotide sequence ID" value="XM_013088548.1"/>
</dbReference>
<dbReference type="RefSeq" id="XP_012944003.1">
    <property type="nucleotide sequence ID" value="XM_013088549.1"/>
</dbReference>
<dbReference type="EnsemblMetazoa" id="NM_001204569.1">
    <property type="protein sequence ID" value="NP_001191498.1"/>
    <property type="gene ID" value="GeneID_100533259"/>
</dbReference>
<dbReference type="GeneID" id="100533259"/>
<dbReference type="CTD" id="100533259"/>
<dbReference type="OrthoDB" id="6286564at2759"/>
<dbReference type="Proteomes" id="UP000694888">
    <property type="component" value="Unplaced"/>
</dbReference>
<dbReference type="GO" id="GO:0005576">
    <property type="term" value="C:extracellular region"/>
    <property type="evidence" value="ECO:0007669"/>
    <property type="project" value="UniProtKB-SubCell"/>
</dbReference>
<accession>Q8T112</accession>
<protein>
    <recommendedName>
        <fullName>Cerebrin prohormone</fullName>
    </recommendedName>
    <component>
        <recommendedName>
            <fullName>Cerebrin</fullName>
        </recommendedName>
    </component>
</protein>
<sequence length="86" mass="9575">MFGYRSLLVLLVTLSLCLLLQSSHCSAVRTYGNDLDARARREIISLAARLIKLSMYGPEDDSFVKRNGGTADALYNLPDLEKIGKR</sequence>
<comment type="function">
    <text evidence="1">May function as a hormone and may play a neuromodulatory role.</text>
</comment>
<comment type="subcellular location">
    <subcellularLocation>
        <location>Secreted</location>
    </subcellularLocation>
</comment>
<comment type="tissue specificity">
    <text evidence="1">Expressed only in cerebral ganglion.</text>
</comment>
<comment type="mass spectrometry" mass="4215.0" method="MALDI" evidence="1">
    <molecule>Cerebrin prohormone</molecule>
</comment>
<comment type="mass spectrometry" mass="1803.0" method="MALDI" evidence="1">
    <molecule>Cerebrin</molecule>
</comment>
<gene>
    <name type="primary">CBPH</name>
</gene>
<name>CBPH_APLCA</name>
<organism>
    <name type="scientific">Aplysia californica</name>
    <name type="common">California sea hare</name>
    <dbReference type="NCBI Taxonomy" id="6500"/>
    <lineage>
        <taxon>Eukaryota</taxon>
        <taxon>Metazoa</taxon>
        <taxon>Spiralia</taxon>
        <taxon>Lophotrochozoa</taxon>
        <taxon>Mollusca</taxon>
        <taxon>Gastropoda</taxon>
        <taxon>Heterobranchia</taxon>
        <taxon>Euthyneura</taxon>
        <taxon>Tectipleura</taxon>
        <taxon>Aplysiida</taxon>
        <taxon>Aplysioidea</taxon>
        <taxon>Aplysiidae</taxon>
        <taxon>Aplysia</taxon>
    </lineage>
</organism>
<reference key="1">
    <citation type="journal article" date="2001" name="J. Neurochem.">
        <title>Cerebrin prohormone processing, distribution and action in Aplysia californica.</title>
        <authorList>
            <person name="Li L."/>
            <person name="Floyd P.D."/>
            <person name="Rubakhin S.S."/>
            <person name="Romanova E.V."/>
            <person name="Jing J."/>
            <person name="Alexeeva V.Y."/>
            <person name="Dembrow N.C."/>
            <person name="Weiss K.R."/>
            <person name="Vilim F.S."/>
            <person name="Sweedler J.V."/>
        </authorList>
    </citation>
    <scope>NUCLEOTIDE SEQUENCE [MRNA]</scope>
    <scope>PROTEIN SEQUENCE OF 67-83</scope>
    <scope>FUNCTION</scope>
    <scope>MASS SPECTROMETRY</scope>
    <scope>TISSUE SPECIFICITY</scope>
    <scope>AMIDATION AT ILE-83</scope>
</reference>
<keyword id="KW-0027">Amidation</keyword>
<keyword id="KW-0165">Cleavage on pair of basic residues</keyword>
<keyword id="KW-0903">Direct protein sequencing</keyword>
<keyword id="KW-0964">Secreted</keyword>
<keyword id="KW-0732">Signal</keyword>
<feature type="signal peptide">
    <location>
        <begin position="1"/>
        <end position="27"/>
    </location>
</feature>
<feature type="chain" id="PRO_0000255265" description="Cerebrin prohormone">
    <location>
        <begin position="28"/>
        <end position="86"/>
    </location>
</feature>
<feature type="propeptide" id="PRO_0000255266">
    <location>
        <begin position="28"/>
        <end position="64"/>
    </location>
</feature>
<feature type="peptide" id="PRO_0000255267" description="Cerebrin">
    <location>
        <begin position="67"/>
        <end position="83"/>
    </location>
</feature>
<feature type="modified residue" description="Isoleucine amide" evidence="1">
    <location>
        <position position="83"/>
    </location>
</feature>